<sequence>MSESDPVPGGRPGEVERATALSGELTGQGVHGVVLAYVDTAGIARVKTVPTAKLAAAAAWGVGMSPVFDTFLADDSIVGTDVLGSPDGDLRLYPDLDRLTMLAAQPGWAWAPVDRITQEGAPHPACGRTVLRRIVAGAAERHGITFRAAVEVEWVVGRGDAGGDAFVPAVSGPAYGAARQVELSDCAADLLAALAAQGVDVEQFHPEYAAGQFEVSVGALGPVAAADHSVLVRQTIRAVSARHGLRVSFAPAVLGQGVGNGGHLHLSAWRDGTNLHAGGTARCGMTAEAESFVAGVLGHLPALTALTAPSPASRLRLRPSQWAGVFTAWGRETREAALRIVTGTAGIRDRAANLEVKPVDLAANPYLALASVIAAGLDGLASSAPLPEEITGDPARLDPAAAAARGVRRLPVTLTESVAAFRTDGVLREALGPVLADAVIAVRLGEAGSVEGLDDDGVAAAYRWKY</sequence>
<proteinExistence type="evidence at protein level"/>
<name>GLNA3_STRCO</name>
<comment type="function">
    <text evidence="6 7 8">Involved in the catabolism of polyamines. Catalyzes the ATP-dependent gamma-glutamylation of polyamines. Substrates include putrescine, cadaverine, spermidine and spermine, with a preference for long-chain polyamines spermidine and spermine (PubMed:28487688, PubMed:35409114). Is not able to compensate for the loss of glutamine synthetases (GSs) (PubMed:28487688). No complementation of the L-glutamine auxotrophy of an E.coli glnA mutant (PubMed:16932908). Involved in morphological differentiation and in the production of secondary metabolites (PubMed:28487688). Together with GlnA2, enables survival of S.coelicolor under exposure to high local environmental polyamine concentrations, which is toxic to the cells (PubMed:35409114).</text>
</comment>
<comment type="catalytic activity">
    <reaction evidence="8">
        <text>spermine + L-glutamate + ATP = gamma-L-glutamylspermine + ADP + phosphate + H(+)</text>
        <dbReference type="Rhea" id="RHEA:73895"/>
        <dbReference type="ChEBI" id="CHEBI:15378"/>
        <dbReference type="ChEBI" id="CHEBI:29985"/>
        <dbReference type="ChEBI" id="CHEBI:30616"/>
        <dbReference type="ChEBI" id="CHEBI:43474"/>
        <dbReference type="ChEBI" id="CHEBI:45725"/>
        <dbReference type="ChEBI" id="CHEBI:193052"/>
        <dbReference type="ChEBI" id="CHEBI:456216"/>
    </reaction>
    <physiologicalReaction direction="left-to-right" evidence="8">
        <dbReference type="Rhea" id="RHEA:73896"/>
    </physiologicalReaction>
</comment>
<comment type="catalytic activity">
    <reaction evidence="8">
        <text>spermidine + L-glutamate + ATP = gamma-L-glutamylspermidine + ADP + phosphate + H(+)</text>
        <dbReference type="Rhea" id="RHEA:73891"/>
        <dbReference type="ChEBI" id="CHEBI:15378"/>
        <dbReference type="ChEBI" id="CHEBI:29985"/>
        <dbReference type="ChEBI" id="CHEBI:30616"/>
        <dbReference type="ChEBI" id="CHEBI:43474"/>
        <dbReference type="ChEBI" id="CHEBI:57834"/>
        <dbReference type="ChEBI" id="CHEBI:193051"/>
        <dbReference type="ChEBI" id="CHEBI:456216"/>
    </reaction>
    <physiologicalReaction direction="left-to-right" evidence="8">
        <dbReference type="Rhea" id="RHEA:73892"/>
    </physiologicalReaction>
</comment>
<comment type="catalytic activity">
    <reaction evidence="7 8">
        <text>putrescine + L-glutamate + ATP = gamma-L-glutamylputrescine + ADP + phosphate + H(+)</text>
        <dbReference type="Rhea" id="RHEA:13633"/>
        <dbReference type="ChEBI" id="CHEBI:15378"/>
        <dbReference type="ChEBI" id="CHEBI:29985"/>
        <dbReference type="ChEBI" id="CHEBI:30616"/>
        <dbReference type="ChEBI" id="CHEBI:43474"/>
        <dbReference type="ChEBI" id="CHEBI:58731"/>
        <dbReference type="ChEBI" id="CHEBI:326268"/>
        <dbReference type="ChEBI" id="CHEBI:456216"/>
    </reaction>
    <physiologicalReaction direction="left-to-right" evidence="7 8">
        <dbReference type="Rhea" id="RHEA:13634"/>
    </physiologicalReaction>
</comment>
<comment type="catalytic activity">
    <reaction evidence="8">
        <text>cadaverine + L-glutamate + ATP = gamma-L-glutamylcadaverine + ADP + phosphate + H(+)</text>
        <dbReference type="Rhea" id="RHEA:73899"/>
        <dbReference type="ChEBI" id="CHEBI:15378"/>
        <dbReference type="ChEBI" id="CHEBI:29985"/>
        <dbReference type="ChEBI" id="CHEBI:30616"/>
        <dbReference type="ChEBI" id="CHEBI:43474"/>
        <dbReference type="ChEBI" id="CHEBI:58384"/>
        <dbReference type="ChEBI" id="CHEBI:193053"/>
        <dbReference type="ChEBI" id="CHEBI:456216"/>
    </reaction>
    <physiologicalReaction direction="left-to-right" evidence="8">
        <dbReference type="Rhea" id="RHEA:73900"/>
    </physiologicalReaction>
</comment>
<comment type="cofactor">
    <cofactor evidence="2">
        <name>Mg(2+)</name>
        <dbReference type="ChEBI" id="CHEBI:18420"/>
    </cofactor>
    <text evidence="2">Binds 2 Mg(2+) ions per subunit.</text>
</comment>
<comment type="pathway">
    <text evidence="7 8">Amine and polyamine degradation; putrescine degradation.</text>
</comment>
<comment type="pathway">
    <text evidence="8">Amine and polyamine degradation; spermidine degradation.</text>
</comment>
<comment type="pathway">
    <text evidence="8">Amine and polyamine degradation; spermine degradation.</text>
</comment>
<comment type="tissue specificity">
    <text evidence="7">Expressed in mycelium.</text>
</comment>
<comment type="induction">
    <text evidence="7 8">Expression is induced by exogenous putrescine, cadaverine and spermidine. Induced also by ammonium limitation, but only with a simultaneous low glucose level (PubMed:28487688). Transcriptionally regulated by EpuRII (PubMed:35409114).</text>
</comment>
<comment type="disruption phenotype">
    <text evidence="6 7 8">Normal growth on defined Evans agar supplemented with ammonium chloride, sodium nitrate, monosodium L-glutamate or L-glutamine, but no growth when supplemented with high concentration 200 mM putrescine, 50 mM cadaverine, 25 mM spermidine or 25 mM spermine as a sole nitrogen source. Defective formation of aerial mycelium and deficient sporulation on defined Evans agar supplemented with glutamate. Nitrate, glutamine and ammonium supplementation of this medium results in increased actinorhodin (blue antibiotic) and prodigiosin (red antibiotic) production. Grows poorly and with a decreased life span in a rich complex liquid medium supplemented with a mixture of putrescine, cadaverine, spermidine and spermine (25 mM of each) showing abnormal mycelium morphology (PubMed:28487688). No essential blockade on morphological or physiological differentiation as still able to sporulate and produce actinorhodin (PubMed:16932908). No growth in complex LB medium supplemented with a mixture of 25 mM putrescine, 25 mM cadaverine, 25 mM spermidine and 25 mM spermine, inhibited growth with high concentrations of spermidine or spermine (100 mM) in the medium, but survival of the cells with only putrescine or cadaverine supplementation of the medium. Able to grow under starvation conditions on defined Evans agar supplemented with glutamate, glutamine, ammonium, nitrate or urea as a sole nitrogen source, but no growth with 200 mM putrescine, 100 mM cadaverine, 100 mM spermidine or 50 mM spermine (PubMed:35409114). Intracellular accumulation of polyamines putrescine, cadaverine and spermidine (PubMed:28487688, PubMed:35409114).</text>
</comment>
<comment type="similarity">
    <text evidence="4 5">Belongs to the glutamine synthetase family.</text>
</comment>
<gene>
    <name evidence="9 10 11" type="primary">glnA3</name>
    <name evidence="9 10 11 12" type="ordered locus">SCO6962</name>
</gene>
<accession>Q9KZC7</accession>
<feature type="chain" id="PRO_0000456963" description="Gamma-glutamylpolyamine synthetase GlnA3">
    <location>
        <begin position="1"/>
        <end position="466"/>
    </location>
</feature>
<feature type="domain" description="GS catalytic" evidence="4">
    <location>
        <begin position="127"/>
        <end position="466"/>
    </location>
</feature>
<feature type="binding site" evidence="2">
    <location>
        <position position="151"/>
    </location>
    <ligand>
        <name>Mg(2+)</name>
        <dbReference type="ChEBI" id="CHEBI:18420"/>
        <label>1</label>
    </ligand>
</feature>
<feature type="binding site" evidence="2">
    <location>
        <position position="153"/>
    </location>
    <ligand>
        <name>Mg(2+)</name>
        <dbReference type="ChEBI" id="CHEBI:18420"/>
        <label>2</label>
    </ligand>
</feature>
<feature type="binding site" evidence="3">
    <location>
        <position position="202"/>
    </location>
    <ligand>
        <name>ATP</name>
        <dbReference type="ChEBI" id="CHEBI:30616"/>
    </ligand>
</feature>
<feature type="binding site" evidence="2">
    <location>
        <position position="207"/>
    </location>
    <ligand>
        <name>Mg(2+)</name>
        <dbReference type="ChEBI" id="CHEBI:18420"/>
        <label>2</label>
    </ligand>
</feature>
<feature type="binding site" evidence="2">
    <location>
        <position position="214"/>
    </location>
    <ligand>
        <name>Mg(2+)</name>
        <dbReference type="ChEBI" id="CHEBI:18420"/>
        <label>2</label>
    </ligand>
</feature>
<feature type="binding site" evidence="2">
    <location>
        <position position="259"/>
    </location>
    <ligand>
        <name>L-glutamate</name>
        <dbReference type="ChEBI" id="CHEBI:29985"/>
    </ligand>
</feature>
<feature type="binding site" evidence="2">
    <location>
        <position position="263"/>
    </location>
    <ligand>
        <name>Mg(2+)</name>
        <dbReference type="ChEBI" id="CHEBI:18420"/>
        <label>1</label>
    </ligand>
</feature>
<feature type="binding site" evidence="1">
    <location>
        <position position="267"/>
    </location>
    <ligand>
        <name>ATP</name>
        <dbReference type="ChEBI" id="CHEBI:30616"/>
    </ligand>
</feature>
<feature type="binding site" evidence="1">
    <location>
        <position position="316"/>
    </location>
    <ligand>
        <name>L-glutamate</name>
        <dbReference type="ChEBI" id="CHEBI:29985"/>
    </ligand>
</feature>
<feature type="binding site" evidence="3">
    <location>
        <position position="334"/>
    </location>
    <ligand>
        <name>ATP</name>
        <dbReference type="ChEBI" id="CHEBI:30616"/>
    </ligand>
</feature>
<feature type="binding site" evidence="3">
    <location>
        <position position="334"/>
    </location>
    <ligand>
        <name>L-glutamate</name>
        <dbReference type="ChEBI" id="CHEBI:29985"/>
    </ligand>
</feature>
<feature type="binding site" evidence="3">
    <location>
        <position position="339"/>
    </location>
    <ligand>
        <name>ATP</name>
        <dbReference type="ChEBI" id="CHEBI:30616"/>
    </ligand>
</feature>
<feature type="binding site" evidence="2">
    <location>
        <position position="355"/>
    </location>
    <ligand>
        <name>Mg(2+)</name>
        <dbReference type="ChEBI" id="CHEBI:18420"/>
        <label>1</label>
    </ligand>
</feature>
<evidence type="ECO:0000250" key="1">
    <source>
        <dbReference type="UniProtKB" id="P0A1P6"/>
    </source>
</evidence>
<evidence type="ECO:0000250" key="2">
    <source>
        <dbReference type="UniProtKB" id="P12425"/>
    </source>
</evidence>
<evidence type="ECO:0000250" key="3">
    <source>
        <dbReference type="UniProtKB" id="P9WN39"/>
    </source>
</evidence>
<evidence type="ECO:0000255" key="4">
    <source>
        <dbReference type="PROSITE-ProRule" id="PRU01331"/>
    </source>
</evidence>
<evidence type="ECO:0000255" key="5">
    <source>
        <dbReference type="RuleBase" id="RU000384"/>
    </source>
</evidence>
<evidence type="ECO:0000269" key="6">
    <source>
    </source>
</evidence>
<evidence type="ECO:0000269" key="7">
    <source>
    </source>
</evidence>
<evidence type="ECO:0000269" key="8">
    <source>
    </source>
</evidence>
<evidence type="ECO:0000303" key="9">
    <source>
    </source>
</evidence>
<evidence type="ECO:0000303" key="10">
    <source>
    </source>
</evidence>
<evidence type="ECO:0000303" key="11">
    <source>
    </source>
</evidence>
<evidence type="ECO:0000312" key="12">
    <source>
        <dbReference type="EMBL" id="CAB89023.1"/>
    </source>
</evidence>
<evidence type="ECO:0000312" key="13">
    <source>
        <dbReference type="Proteomes" id="UP000001973"/>
    </source>
</evidence>
<dbReference type="EC" id="6.3.1.-" evidence="7 8"/>
<dbReference type="EMBL" id="AL939129">
    <property type="protein sequence ID" value="CAB89023.1"/>
    <property type="molecule type" value="Genomic_DNA"/>
</dbReference>
<dbReference type="RefSeq" id="NP_631028.1">
    <property type="nucleotide sequence ID" value="NC_003888.3"/>
</dbReference>
<dbReference type="RefSeq" id="WP_011031340.1">
    <property type="nucleotide sequence ID" value="NZ_VNID01000012.1"/>
</dbReference>
<dbReference type="SMR" id="Q9KZC7"/>
<dbReference type="FunCoup" id="Q9KZC7">
    <property type="interactions" value="194"/>
</dbReference>
<dbReference type="STRING" id="100226.gene:17764620"/>
<dbReference type="PaxDb" id="100226-SCO6962"/>
<dbReference type="KEGG" id="sco:SCO6962"/>
<dbReference type="PATRIC" id="fig|100226.15.peg.7062"/>
<dbReference type="eggNOG" id="COG0174">
    <property type="taxonomic scope" value="Bacteria"/>
</dbReference>
<dbReference type="HOGENOM" id="CLU_017290_6_0_11"/>
<dbReference type="InParanoid" id="Q9KZC7"/>
<dbReference type="OrthoDB" id="3277468at2"/>
<dbReference type="PhylomeDB" id="Q9KZC7"/>
<dbReference type="UniPathway" id="UPA00188"/>
<dbReference type="UniPathway" id="UPA00211"/>
<dbReference type="UniPathway" id="UPA00250"/>
<dbReference type="Proteomes" id="UP000001973">
    <property type="component" value="Chromosome"/>
</dbReference>
<dbReference type="GO" id="GO:0016880">
    <property type="term" value="F:acid-ammonia (or amide) ligase activity"/>
    <property type="evidence" value="ECO:0000314"/>
    <property type="project" value="UniProtKB"/>
</dbReference>
<dbReference type="GO" id="GO:0005524">
    <property type="term" value="F:ATP binding"/>
    <property type="evidence" value="ECO:0000250"/>
    <property type="project" value="UniProtKB"/>
</dbReference>
<dbReference type="GO" id="GO:0034024">
    <property type="term" value="F:glutamate-putrescine ligase activity"/>
    <property type="evidence" value="ECO:0000314"/>
    <property type="project" value="UniProtKB"/>
</dbReference>
<dbReference type="GO" id="GO:0004356">
    <property type="term" value="F:glutamine synthetase activity"/>
    <property type="evidence" value="ECO:0000318"/>
    <property type="project" value="GO_Central"/>
</dbReference>
<dbReference type="GO" id="GO:0016874">
    <property type="term" value="F:ligase activity"/>
    <property type="evidence" value="ECO:0000314"/>
    <property type="project" value="UniProtKB"/>
</dbReference>
<dbReference type="GO" id="GO:0000287">
    <property type="term" value="F:magnesium ion binding"/>
    <property type="evidence" value="ECO:0000250"/>
    <property type="project" value="UniProtKB"/>
</dbReference>
<dbReference type="GO" id="GO:0006536">
    <property type="term" value="P:glutamate metabolic process"/>
    <property type="evidence" value="ECO:0000314"/>
    <property type="project" value="UniProtKB"/>
</dbReference>
<dbReference type="GO" id="GO:0006542">
    <property type="term" value="P:glutamine biosynthetic process"/>
    <property type="evidence" value="ECO:0000318"/>
    <property type="project" value="GO_Central"/>
</dbReference>
<dbReference type="GO" id="GO:0006598">
    <property type="term" value="P:polyamine catabolic process"/>
    <property type="evidence" value="ECO:0000314"/>
    <property type="project" value="UniProtKB"/>
</dbReference>
<dbReference type="GO" id="GO:0009447">
    <property type="term" value="P:putrescine catabolic process"/>
    <property type="evidence" value="ECO:0000314"/>
    <property type="project" value="UniProtKB"/>
</dbReference>
<dbReference type="GO" id="GO:1904583">
    <property type="term" value="P:response to polyamine macromolecule"/>
    <property type="evidence" value="ECO:0000315"/>
    <property type="project" value="UniProtKB"/>
</dbReference>
<dbReference type="GO" id="GO:0009636">
    <property type="term" value="P:response to toxic substance"/>
    <property type="evidence" value="ECO:0000315"/>
    <property type="project" value="UniProtKB"/>
</dbReference>
<dbReference type="GO" id="GO:0046203">
    <property type="term" value="P:spermidine catabolic process"/>
    <property type="evidence" value="ECO:0000314"/>
    <property type="project" value="UniProtKB"/>
</dbReference>
<dbReference type="GO" id="GO:0046208">
    <property type="term" value="P:spermine catabolic process"/>
    <property type="evidence" value="ECO:0000314"/>
    <property type="project" value="UniProtKB"/>
</dbReference>
<dbReference type="Gene3D" id="3.10.20.70">
    <property type="entry name" value="Glutamine synthetase, N-terminal domain"/>
    <property type="match status" value="1"/>
</dbReference>
<dbReference type="Gene3D" id="3.30.590.10">
    <property type="entry name" value="Glutamine synthetase/guanido kinase, catalytic domain"/>
    <property type="match status" value="1"/>
</dbReference>
<dbReference type="InterPro" id="IPR008147">
    <property type="entry name" value="Gln_synt_N"/>
</dbReference>
<dbReference type="InterPro" id="IPR036651">
    <property type="entry name" value="Gln_synt_N_sf"/>
</dbReference>
<dbReference type="InterPro" id="IPR014746">
    <property type="entry name" value="Gln_synth/guanido_kin_cat_dom"/>
</dbReference>
<dbReference type="InterPro" id="IPR008146">
    <property type="entry name" value="Gln_synth_cat_dom"/>
</dbReference>
<dbReference type="PANTHER" id="PTHR43785">
    <property type="entry name" value="GAMMA-GLUTAMYLPUTRESCINE SYNTHETASE"/>
    <property type="match status" value="1"/>
</dbReference>
<dbReference type="PANTHER" id="PTHR43785:SF12">
    <property type="entry name" value="TYPE-1 GLUTAMINE SYNTHETASE 2"/>
    <property type="match status" value="1"/>
</dbReference>
<dbReference type="Pfam" id="PF00120">
    <property type="entry name" value="Gln-synt_C"/>
    <property type="match status" value="1"/>
</dbReference>
<dbReference type="SMART" id="SM01230">
    <property type="entry name" value="Gln-synt_C"/>
    <property type="match status" value="1"/>
</dbReference>
<dbReference type="SUPFAM" id="SSF54368">
    <property type="entry name" value="Glutamine synthetase, N-terminal domain"/>
    <property type="match status" value="1"/>
</dbReference>
<dbReference type="SUPFAM" id="SSF55931">
    <property type="entry name" value="Glutamine synthetase/guanido kinase"/>
    <property type="match status" value="1"/>
</dbReference>
<dbReference type="PROSITE" id="PS51986">
    <property type="entry name" value="GS_BETA_GRASP"/>
    <property type="match status" value="1"/>
</dbReference>
<dbReference type="PROSITE" id="PS51987">
    <property type="entry name" value="GS_CATALYTIC"/>
    <property type="match status" value="1"/>
</dbReference>
<keyword id="KW-0067">ATP-binding</keyword>
<keyword id="KW-0436">Ligase</keyword>
<keyword id="KW-0460">Magnesium</keyword>
<keyword id="KW-0479">Metal-binding</keyword>
<keyword id="KW-0547">Nucleotide-binding</keyword>
<keyword id="KW-1185">Reference proteome</keyword>
<protein>
    <recommendedName>
        <fullName evidence="10 11">Gamma-glutamylpolyamine synthetase GlnA3</fullName>
        <ecNumber evidence="7 8">6.3.1.-</ecNumber>
    </recommendedName>
</protein>
<organism evidence="13">
    <name type="scientific">Streptomyces coelicolor (strain ATCC BAA-471 / A3(2) / M145)</name>
    <dbReference type="NCBI Taxonomy" id="100226"/>
    <lineage>
        <taxon>Bacteria</taxon>
        <taxon>Bacillati</taxon>
        <taxon>Actinomycetota</taxon>
        <taxon>Actinomycetes</taxon>
        <taxon>Kitasatosporales</taxon>
        <taxon>Streptomycetaceae</taxon>
        <taxon>Streptomyces</taxon>
        <taxon>Streptomyces albidoflavus group</taxon>
    </lineage>
</organism>
<reference evidence="12 13" key="1">
    <citation type="journal article" date="2002" name="Nature">
        <title>Complete genome sequence of the model actinomycete Streptomyces coelicolor A3(2).</title>
        <authorList>
            <person name="Bentley S.D."/>
            <person name="Chater K.F."/>
            <person name="Cerdeno-Tarraga A.-M."/>
            <person name="Challis G.L."/>
            <person name="Thomson N.R."/>
            <person name="James K.D."/>
            <person name="Harris D.E."/>
            <person name="Quail M.A."/>
            <person name="Kieser H."/>
            <person name="Harper D."/>
            <person name="Bateman A."/>
            <person name="Brown S."/>
            <person name="Chandra G."/>
            <person name="Chen C.W."/>
            <person name="Collins M."/>
            <person name="Cronin A."/>
            <person name="Fraser A."/>
            <person name="Goble A."/>
            <person name="Hidalgo J."/>
            <person name="Hornsby T."/>
            <person name="Howarth S."/>
            <person name="Huang C.-H."/>
            <person name="Kieser T."/>
            <person name="Larke L."/>
            <person name="Murphy L.D."/>
            <person name="Oliver K."/>
            <person name="O'Neil S."/>
            <person name="Rabbinowitsch E."/>
            <person name="Rajandream M.A."/>
            <person name="Rutherford K.M."/>
            <person name="Rutter S."/>
            <person name="Seeger K."/>
            <person name="Saunders D."/>
            <person name="Sharp S."/>
            <person name="Squares R."/>
            <person name="Squares S."/>
            <person name="Taylor K."/>
            <person name="Warren T."/>
            <person name="Wietzorrek A."/>
            <person name="Woodward J.R."/>
            <person name="Barrell B.G."/>
            <person name="Parkhill J."/>
            <person name="Hopwood D.A."/>
        </authorList>
    </citation>
    <scope>NUCLEOTIDE SEQUENCE [LARGE SCALE GENOMIC DNA]</scope>
    <source>
        <strain evidence="13">ATCC BAA-471 / A3(2) / M145</strain>
    </source>
</reference>
<reference key="2">
    <citation type="journal article" date="2006" name="Arch. Microbiol.">
        <title>Investigation of the functional properties and regulation of three glutamine synthetase-like genes in Streptomyces coelicolor A3(2).</title>
        <authorList>
            <person name="Rexer H.U."/>
            <person name="Schaeberle T."/>
            <person name="Wohlleben W."/>
            <person name="Engels A."/>
        </authorList>
    </citation>
    <scope>FUNCTION</scope>
    <scope>DISRUPTION PHENOTYPE</scope>
    <source>
        <strain evidence="9">ATCC BAA-471 / A3(2) / M145</strain>
    </source>
</reference>
<reference key="3">
    <citation type="journal article" date="2017" name="Front. Microbiol.">
        <title>Gamma-Glutamylpolyamine Synthetase GlnA3 Is Involved in the First Step of Polyamine Degradation Pathway in Streptomyces coelicolor M145.</title>
        <authorList>
            <person name="Krysenko S."/>
            <person name="Okoniewski N."/>
            <person name="Kulik A."/>
            <person name="Matthews A."/>
            <person name="Grimpo J."/>
            <person name="Wohlleben W."/>
            <person name="Bera A."/>
        </authorList>
    </citation>
    <scope>FUNCTION</scope>
    <scope>CATALYTIC ACTIVITY</scope>
    <scope>PATHWAY</scope>
    <scope>TISSUE SPECIFICITY</scope>
    <scope>INDUCTION</scope>
    <scope>DISRUPTION PHENOTYPE</scope>
    <source>
        <strain evidence="10">ATCC BAA-471 / A3(2) / M145</strain>
    </source>
</reference>
<reference key="4">
    <citation type="journal article" date="2022" name="Int. J. Mol. Sci.">
        <title>A Second Gamma-Glutamylpolyamine Synthetase, GlnA2, Is Involved in Polyamine Catabolism in Streptomyces coelicolor.</title>
        <authorList>
            <person name="Krysenko S."/>
            <person name="Okoniewski N."/>
            <person name="Nentwich M."/>
            <person name="Matthews A."/>
            <person name="Baeuerle M."/>
            <person name="Zinser A."/>
            <person name="Busche T."/>
            <person name="Kulik A."/>
            <person name="Gursch S."/>
            <person name="Kemeny A."/>
            <person name="Bera A."/>
            <person name="Wohlleben W."/>
        </authorList>
    </citation>
    <scope>FUNCTION</scope>
    <scope>CATALYTIC ACTIVITY</scope>
    <scope>SUBSTRATE SPECIFICITY</scope>
    <scope>PATHWAY</scope>
    <scope>INDUCTION</scope>
    <scope>DISRUPTION PHENOTYPE</scope>
    <scope>3D-STRUCTURE MODELING</scope>
    <source>
        <strain evidence="11">ATCC BAA-471 / A3(2) / M145</strain>
    </source>
</reference>